<organism>
    <name type="scientific">Human papillomavirus type 41</name>
    <dbReference type="NCBI Taxonomy" id="10589"/>
    <lineage>
        <taxon>Viruses</taxon>
        <taxon>Monodnaviria</taxon>
        <taxon>Shotokuvirae</taxon>
        <taxon>Cossaviricota</taxon>
        <taxon>Papovaviricetes</taxon>
        <taxon>Zurhausenvirales</taxon>
        <taxon>Papillomaviridae</taxon>
        <taxon>Firstpapillomavirinae</taxon>
        <taxon>Nupapillomavirus</taxon>
        <taxon>Nupapillomavirus 1</taxon>
    </lineage>
</organism>
<reference key="1">
    <citation type="journal article" date="1991" name="Virus Res.">
        <title>Nucleotide sequence of human papillomavirus (HPV) type 41: an unusual HPV type without a typical E2 binding site consensus sequence.</title>
        <authorList>
            <person name="Hirt L."/>
            <person name="Hirsch-Behnam A."/>
            <person name="de Villiers E.M."/>
        </authorList>
    </citation>
    <scope>NUCLEOTIDE SEQUENCE [GENOMIC DNA]</scope>
</reference>
<proteinExistence type="inferred from homology"/>
<name>VE4_HPV41</name>
<gene>
    <name type="primary">E4</name>
</gene>
<evidence type="ECO:0000250" key="1">
    <source>
        <dbReference type="UniProtKB" id="P06922"/>
    </source>
</evidence>
<evidence type="ECO:0000256" key="2">
    <source>
        <dbReference type="SAM" id="MobiDB-lite"/>
    </source>
</evidence>
<evidence type="ECO:0000305" key="3"/>
<keyword id="KW-0244">Early protein</keyword>
<keyword id="KW-1035">Host cytoplasm</keyword>
<keyword id="KW-1079">Host G2/M cell cycle arrest by virus</keyword>
<keyword id="KW-1048">Host nucleus</keyword>
<keyword id="KW-0945">Host-virus interaction</keyword>
<keyword id="KW-1121">Modulation of host cell cycle by virus</keyword>
<keyword id="KW-0597">Phosphoprotein</keyword>
<keyword id="KW-1185">Reference proteome</keyword>
<protein>
    <recommendedName>
        <fullName>Protein E4</fullName>
    </recommendedName>
</protein>
<organismHost>
    <name type="scientific">Homo sapiens</name>
    <name type="common">Human</name>
    <dbReference type="NCBI Taxonomy" id="9606"/>
</organismHost>
<dbReference type="EMBL" id="X56147">
    <property type="protein sequence ID" value="CAA39616.1"/>
    <property type="status" value="ALT_SEQ"/>
    <property type="molecule type" value="Genomic_DNA"/>
</dbReference>
<dbReference type="PIR" id="E43550">
    <property type="entry name" value="E43550"/>
</dbReference>
<dbReference type="SMR" id="P27553"/>
<dbReference type="KEGG" id="vg:1489279"/>
<dbReference type="Proteomes" id="UP000006367">
    <property type="component" value="Genome"/>
</dbReference>
<dbReference type="GO" id="GO:0030430">
    <property type="term" value="C:host cell cytoplasm"/>
    <property type="evidence" value="ECO:0007669"/>
    <property type="project" value="UniProtKB-SubCell"/>
</dbReference>
<dbReference type="GO" id="GO:0042025">
    <property type="term" value="C:host cell nucleus"/>
    <property type="evidence" value="ECO:0007669"/>
    <property type="project" value="UniProtKB-SubCell"/>
</dbReference>
<dbReference type="GO" id="GO:0039592">
    <property type="term" value="P:symbiont-mediated arrest of host cell cycle during G2/M transition"/>
    <property type="evidence" value="ECO:0007669"/>
    <property type="project" value="UniProtKB-KW"/>
</dbReference>
<sequence length="103" mass="12101">MASRVSAPPRGREPQRYYDRRGRDDAETRKRGSRSPQPLSEDEELTDADPPRRPNAGPRRRLFLEETEDRLTSLLESLTKDIESDIEHFERKLRVLLQQKDTI</sequence>
<feature type="chain" id="PRO_0000133273" description="Protein E4">
    <location>
        <begin position="1"/>
        <end position="103"/>
    </location>
</feature>
<feature type="region of interest" description="Disordered" evidence="2">
    <location>
        <begin position="1"/>
        <end position="64"/>
    </location>
</feature>
<feature type="compositionally biased region" description="Basic and acidic residues" evidence="2">
    <location>
        <begin position="10"/>
        <end position="30"/>
    </location>
</feature>
<comment type="function">
    <text evidence="1">Contributes to multiple aspects of the viral life cycle including viral genome amplification, suppression of suprabasal cell differentiation and egress of newly formed virions. Induces host cell cycle arrest at the G2 phase by associating with and preventing the nuclear entry of host CDK1/cyclin B1 complexes. Inhibits cellular DNA replication by preventing loading of host replication licensing proteins MCM2 and MCM7 onto chromatin. Within the cytoplasm, associates with host kinase SRPK1, a splicing factor regulator, and inhibits its activity. Therefore, E4 favors expression of late viral transcripts by inhibiting SRPK1-mediated phosphorylation of host serine-arginine (SR) proteins that have critical roles in mRNA metabolism. Late in the infectious cycle, E4 also acts to diminish the integrity of the keratinocyte by disrupting the keratin cytoskeleton and inducing apoptosis through alteration of mitochondrial function to facilitate egress of the newly formed virions.</text>
</comment>
<comment type="subunit">
    <text evidence="1">Assembles into oligomeric complexes. Interacts with host CDK1. Interacts with host SRPK1; this interaction may favor expression of late viral transcripts. Interacts with host cytokeratin components KRT8 and KRT18.</text>
</comment>
<comment type="subcellular location">
    <subcellularLocation>
        <location evidence="1">Host cytoplasm</location>
    </subcellularLocation>
    <subcellularLocation>
        <location evidence="1">Host nucleus</location>
    </subcellularLocation>
</comment>
<comment type="PTM">
    <text evidence="1">Phosphorylated by host ERK. The phosphorylation triggers a structural change that enhances keratin binding and protein stability.</text>
</comment>
<comment type="miscellaneous">
    <text evidence="1">The major E4 form is first synthesized as an E1^E4 fusion protein from spliced E1^E4 transcripts, such that the first few amino acids of the E4 protein are derived from the N terminus of E1.</text>
</comment>
<comment type="similarity">
    <text evidence="3">Belongs to the papillomaviridae E4 protein family.</text>
</comment>
<accession>P27553</accession>